<sequence length="91" mass="10327">MARMIQCAKLGKEAEGLDFPPLPGELGKRIYESVSKEAWQGWLKQQTMLINENRLNMADPRARQYLMKQTEKYFFGDGADQASGYVPPTEG</sequence>
<feature type="chain" id="PRO_0000246096" description="Probable Fe(2+)-trafficking protein">
    <location>
        <begin position="1"/>
        <end position="91"/>
    </location>
</feature>
<comment type="function">
    <text evidence="1">Could be a mediator in iron transactions between iron acquisition and iron-requiring processes, such as synthesis and/or repair of Fe-S clusters in biosynthetic enzymes.</text>
</comment>
<comment type="similarity">
    <text evidence="1">Belongs to the Fe(2+)-trafficking protein family.</text>
</comment>
<gene>
    <name type="ordered locus">Bcep18194_A5466</name>
</gene>
<reference key="1">
    <citation type="submission" date="2005-10" db="EMBL/GenBank/DDBJ databases">
        <title>Complete sequence of chromosome 1 of Burkholderia sp. 383.</title>
        <authorList>
            <consortium name="US DOE Joint Genome Institute"/>
            <person name="Copeland A."/>
            <person name="Lucas S."/>
            <person name="Lapidus A."/>
            <person name="Barry K."/>
            <person name="Detter J.C."/>
            <person name="Glavina T."/>
            <person name="Hammon N."/>
            <person name="Israni S."/>
            <person name="Pitluck S."/>
            <person name="Chain P."/>
            <person name="Malfatti S."/>
            <person name="Shin M."/>
            <person name="Vergez L."/>
            <person name="Schmutz J."/>
            <person name="Larimer F."/>
            <person name="Land M."/>
            <person name="Kyrpides N."/>
            <person name="Lykidis A."/>
            <person name="Richardson P."/>
        </authorList>
    </citation>
    <scope>NUCLEOTIDE SEQUENCE [LARGE SCALE GENOMIC DNA]</scope>
    <source>
        <strain>ATCC 17760 / DSM 23089 / LMG 22485 / NCIMB 9086 / R18194 / 383</strain>
    </source>
</reference>
<accession>Q39EQ6</accession>
<protein>
    <recommendedName>
        <fullName evidence="1">Probable Fe(2+)-trafficking protein</fullName>
    </recommendedName>
</protein>
<name>FETP_BURL3</name>
<evidence type="ECO:0000255" key="1">
    <source>
        <dbReference type="HAMAP-Rule" id="MF_00686"/>
    </source>
</evidence>
<keyword id="KW-0408">Iron</keyword>
<dbReference type="EMBL" id="CP000151">
    <property type="protein sequence ID" value="ABB09060.1"/>
    <property type="molecule type" value="Genomic_DNA"/>
</dbReference>
<dbReference type="RefSeq" id="WP_006478357.1">
    <property type="nucleotide sequence ID" value="NZ_WNDV01000029.1"/>
</dbReference>
<dbReference type="SMR" id="Q39EQ6"/>
<dbReference type="KEGG" id="bur:Bcep18194_A5466"/>
<dbReference type="HOGENOM" id="CLU_170994_0_0_4"/>
<dbReference type="Proteomes" id="UP000002705">
    <property type="component" value="Chromosome 1"/>
</dbReference>
<dbReference type="GO" id="GO:0005829">
    <property type="term" value="C:cytosol"/>
    <property type="evidence" value="ECO:0007669"/>
    <property type="project" value="TreeGrafter"/>
</dbReference>
<dbReference type="GO" id="GO:0005506">
    <property type="term" value="F:iron ion binding"/>
    <property type="evidence" value="ECO:0007669"/>
    <property type="project" value="UniProtKB-UniRule"/>
</dbReference>
<dbReference type="GO" id="GO:0034599">
    <property type="term" value="P:cellular response to oxidative stress"/>
    <property type="evidence" value="ECO:0007669"/>
    <property type="project" value="TreeGrafter"/>
</dbReference>
<dbReference type="FunFam" id="1.10.3880.10:FF:000001">
    <property type="entry name" value="Probable Fe(2+)-trafficking protein"/>
    <property type="match status" value="1"/>
</dbReference>
<dbReference type="Gene3D" id="1.10.3880.10">
    <property type="entry name" value="Fe(II) trafficking protein YggX"/>
    <property type="match status" value="1"/>
</dbReference>
<dbReference type="HAMAP" id="MF_00686">
    <property type="entry name" value="Fe_traffic_YggX"/>
    <property type="match status" value="1"/>
</dbReference>
<dbReference type="InterPro" id="IPR007457">
    <property type="entry name" value="Fe_traffick_prot_YggX"/>
</dbReference>
<dbReference type="InterPro" id="IPR036766">
    <property type="entry name" value="Fe_traffick_prot_YggX_sf"/>
</dbReference>
<dbReference type="NCBIfam" id="NF003817">
    <property type="entry name" value="PRK05408.1"/>
    <property type="match status" value="1"/>
</dbReference>
<dbReference type="PANTHER" id="PTHR36965">
    <property type="entry name" value="FE(2+)-TRAFFICKING PROTEIN-RELATED"/>
    <property type="match status" value="1"/>
</dbReference>
<dbReference type="PANTHER" id="PTHR36965:SF1">
    <property type="entry name" value="FE(2+)-TRAFFICKING PROTEIN-RELATED"/>
    <property type="match status" value="1"/>
</dbReference>
<dbReference type="Pfam" id="PF04362">
    <property type="entry name" value="Iron_traffic"/>
    <property type="match status" value="1"/>
</dbReference>
<dbReference type="PIRSF" id="PIRSF029827">
    <property type="entry name" value="Fe_traffic_YggX"/>
    <property type="match status" value="1"/>
</dbReference>
<dbReference type="SUPFAM" id="SSF111148">
    <property type="entry name" value="YggX-like"/>
    <property type="match status" value="1"/>
</dbReference>
<proteinExistence type="inferred from homology"/>
<organism>
    <name type="scientific">Burkholderia lata (strain ATCC 17760 / DSM 23089 / LMG 22485 / NCIMB 9086 / R18194 / 383)</name>
    <dbReference type="NCBI Taxonomy" id="482957"/>
    <lineage>
        <taxon>Bacteria</taxon>
        <taxon>Pseudomonadati</taxon>
        <taxon>Pseudomonadota</taxon>
        <taxon>Betaproteobacteria</taxon>
        <taxon>Burkholderiales</taxon>
        <taxon>Burkholderiaceae</taxon>
        <taxon>Burkholderia</taxon>
        <taxon>Burkholderia cepacia complex</taxon>
    </lineage>
</organism>